<proteinExistence type="inferred from homology"/>
<reference key="1">
    <citation type="journal article" date="2009" name="Genome Res.">
        <title>Whole genome sequence of Desulfovibrio magneticus strain RS-1 revealed common gene clusters in magnetotactic bacteria.</title>
        <authorList>
            <person name="Nakazawa H."/>
            <person name="Arakaki A."/>
            <person name="Narita-Yamada S."/>
            <person name="Yashiro I."/>
            <person name="Jinno K."/>
            <person name="Aoki N."/>
            <person name="Tsuruyama A."/>
            <person name="Okamura Y."/>
            <person name="Tanikawa S."/>
            <person name="Fujita N."/>
            <person name="Takeyama H."/>
            <person name="Matsunaga T."/>
        </authorList>
    </citation>
    <scope>NUCLEOTIDE SEQUENCE [LARGE SCALE GENOMIC DNA]</scope>
    <source>
        <strain>ATCC 700980 / DSM 13731 / RS-1</strain>
    </source>
</reference>
<dbReference type="EC" id="5.3.1.9" evidence="1"/>
<dbReference type="EMBL" id="AP010904">
    <property type="protein sequence ID" value="BAH75775.1"/>
    <property type="molecule type" value="Genomic_DNA"/>
</dbReference>
<dbReference type="RefSeq" id="WP_015860957.1">
    <property type="nucleotide sequence ID" value="NC_012796.1"/>
</dbReference>
<dbReference type="SMR" id="C4XST3"/>
<dbReference type="STRING" id="573370.DMR_22840"/>
<dbReference type="KEGG" id="dma:DMR_22840"/>
<dbReference type="eggNOG" id="COG0166">
    <property type="taxonomic scope" value="Bacteria"/>
</dbReference>
<dbReference type="HOGENOM" id="CLU_017947_3_1_7"/>
<dbReference type="OrthoDB" id="140919at2"/>
<dbReference type="UniPathway" id="UPA00109">
    <property type="reaction ID" value="UER00181"/>
</dbReference>
<dbReference type="UniPathway" id="UPA00138"/>
<dbReference type="Proteomes" id="UP000009071">
    <property type="component" value="Chromosome"/>
</dbReference>
<dbReference type="GO" id="GO:0005829">
    <property type="term" value="C:cytosol"/>
    <property type="evidence" value="ECO:0007669"/>
    <property type="project" value="TreeGrafter"/>
</dbReference>
<dbReference type="GO" id="GO:0097367">
    <property type="term" value="F:carbohydrate derivative binding"/>
    <property type="evidence" value="ECO:0007669"/>
    <property type="project" value="InterPro"/>
</dbReference>
<dbReference type="GO" id="GO:0004347">
    <property type="term" value="F:glucose-6-phosphate isomerase activity"/>
    <property type="evidence" value="ECO:0007669"/>
    <property type="project" value="UniProtKB-UniRule"/>
</dbReference>
<dbReference type="GO" id="GO:0048029">
    <property type="term" value="F:monosaccharide binding"/>
    <property type="evidence" value="ECO:0007669"/>
    <property type="project" value="TreeGrafter"/>
</dbReference>
<dbReference type="GO" id="GO:0006094">
    <property type="term" value="P:gluconeogenesis"/>
    <property type="evidence" value="ECO:0007669"/>
    <property type="project" value="UniProtKB-UniRule"/>
</dbReference>
<dbReference type="GO" id="GO:0051156">
    <property type="term" value="P:glucose 6-phosphate metabolic process"/>
    <property type="evidence" value="ECO:0007669"/>
    <property type="project" value="TreeGrafter"/>
</dbReference>
<dbReference type="GO" id="GO:0006096">
    <property type="term" value="P:glycolytic process"/>
    <property type="evidence" value="ECO:0007669"/>
    <property type="project" value="UniProtKB-UniRule"/>
</dbReference>
<dbReference type="CDD" id="cd05015">
    <property type="entry name" value="SIS_PGI_1"/>
    <property type="match status" value="1"/>
</dbReference>
<dbReference type="CDD" id="cd05016">
    <property type="entry name" value="SIS_PGI_2"/>
    <property type="match status" value="1"/>
</dbReference>
<dbReference type="FunFam" id="1.10.1390.10:FF:000001">
    <property type="entry name" value="Glucose-6-phosphate isomerase"/>
    <property type="match status" value="1"/>
</dbReference>
<dbReference type="FunFam" id="3.40.50.10490:FF:000004">
    <property type="entry name" value="Glucose-6-phosphate isomerase"/>
    <property type="match status" value="1"/>
</dbReference>
<dbReference type="Gene3D" id="1.10.1390.10">
    <property type="match status" value="1"/>
</dbReference>
<dbReference type="Gene3D" id="3.40.50.10490">
    <property type="entry name" value="Glucose-6-phosphate isomerase like protein, domain 1"/>
    <property type="match status" value="2"/>
</dbReference>
<dbReference type="HAMAP" id="MF_00473">
    <property type="entry name" value="G6P_isomerase"/>
    <property type="match status" value="1"/>
</dbReference>
<dbReference type="InterPro" id="IPR001672">
    <property type="entry name" value="G6P_Isomerase"/>
</dbReference>
<dbReference type="InterPro" id="IPR023096">
    <property type="entry name" value="G6P_Isomerase_C"/>
</dbReference>
<dbReference type="InterPro" id="IPR018189">
    <property type="entry name" value="Phosphoglucose_isomerase_CS"/>
</dbReference>
<dbReference type="InterPro" id="IPR046348">
    <property type="entry name" value="SIS_dom_sf"/>
</dbReference>
<dbReference type="InterPro" id="IPR035476">
    <property type="entry name" value="SIS_PGI_1"/>
</dbReference>
<dbReference type="InterPro" id="IPR035482">
    <property type="entry name" value="SIS_PGI_2"/>
</dbReference>
<dbReference type="NCBIfam" id="NF001211">
    <property type="entry name" value="PRK00179.1"/>
    <property type="match status" value="1"/>
</dbReference>
<dbReference type="PANTHER" id="PTHR11469">
    <property type="entry name" value="GLUCOSE-6-PHOSPHATE ISOMERASE"/>
    <property type="match status" value="1"/>
</dbReference>
<dbReference type="PANTHER" id="PTHR11469:SF1">
    <property type="entry name" value="GLUCOSE-6-PHOSPHATE ISOMERASE"/>
    <property type="match status" value="1"/>
</dbReference>
<dbReference type="Pfam" id="PF00342">
    <property type="entry name" value="PGI"/>
    <property type="match status" value="1"/>
</dbReference>
<dbReference type="PRINTS" id="PR00662">
    <property type="entry name" value="G6PISOMERASE"/>
</dbReference>
<dbReference type="SUPFAM" id="SSF53697">
    <property type="entry name" value="SIS domain"/>
    <property type="match status" value="1"/>
</dbReference>
<dbReference type="PROSITE" id="PS00765">
    <property type="entry name" value="P_GLUCOSE_ISOMERASE_1"/>
    <property type="match status" value="1"/>
</dbReference>
<dbReference type="PROSITE" id="PS00174">
    <property type="entry name" value="P_GLUCOSE_ISOMERASE_2"/>
    <property type="match status" value="1"/>
</dbReference>
<dbReference type="PROSITE" id="PS51463">
    <property type="entry name" value="P_GLUCOSE_ISOMERASE_3"/>
    <property type="match status" value="1"/>
</dbReference>
<feature type="chain" id="PRO_1000206363" description="Glucose-6-phosphate isomerase">
    <location>
        <begin position="1"/>
        <end position="549"/>
    </location>
</feature>
<feature type="active site" description="Proton donor" evidence="1">
    <location>
        <position position="353"/>
    </location>
</feature>
<feature type="active site" evidence="1">
    <location>
        <position position="384"/>
    </location>
</feature>
<feature type="active site" evidence="1">
    <location>
        <position position="512"/>
    </location>
</feature>
<name>G6PI_SOLM1</name>
<protein>
    <recommendedName>
        <fullName evidence="1">Glucose-6-phosphate isomerase</fullName>
        <shortName evidence="1">GPI</shortName>
        <ecNumber evidence="1">5.3.1.9</ecNumber>
    </recommendedName>
    <alternativeName>
        <fullName evidence="1">Phosphoglucose isomerase</fullName>
        <shortName evidence="1">PGI</shortName>
    </alternativeName>
    <alternativeName>
        <fullName evidence="1">Phosphohexose isomerase</fullName>
        <shortName evidence="1">PHI</shortName>
    </alternativeName>
</protein>
<sequence>MAQLTEHPAHSALVAHHERVRDLHMRDLFAADSGRFDKLSLRLGDILFDYSKNRVTDETLGLLFDLARQAGVEARRDAMFAGEKINRTENRAVLHVALRNRANRPILVDGHDVMPDVNKVLNQMRIFCGRVHSGQWKGYSGKAITDVVNIGIGGSDLGPQMASLALAQYAVPGITSHFVSNVDGAHMVETLQRVSPETTLFIIASKTFTTLETMANAHDARDWFLAQAGDEAAVAKHFVALSTNAEAVAAFGIDTANMFAFWDWVGGRYSLWSAIGLSIALAVGFDNFEAMLEGAFLADEHFRSAPLERNIPVVMGLLGIWYNNYFGAQTQAILPYDQHLTRFAAYFQQGDMESNGKSVTNDGRFVDYTTGPIIWGEPGTNGQHAFYQLIHQGRKLIPCDFLAAAITRTPLGRHQDMLLSNFFAQTEALMKGKTVDEARAELADKVLGEAQLELLSKAKSFTGNRPTNSFLYRVLDPKTLGTLIALYEHKIFVQGTIWDINSYDQMGVELGKVLAGTILKELENDAPVASHDCSTNGLVNYYKELRLGD</sequence>
<keyword id="KW-0963">Cytoplasm</keyword>
<keyword id="KW-0312">Gluconeogenesis</keyword>
<keyword id="KW-0324">Glycolysis</keyword>
<keyword id="KW-0413">Isomerase</keyword>
<evidence type="ECO:0000255" key="1">
    <source>
        <dbReference type="HAMAP-Rule" id="MF_00473"/>
    </source>
</evidence>
<comment type="function">
    <text evidence="1">Catalyzes the reversible isomerization of glucose-6-phosphate to fructose-6-phosphate.</text>
</comment>
<comment type="catalytic activity">
    <reaction evidence="1">
        <text>alpha-D-glucose 6-phosphate = beta-D-fructose 6-phosphate</text>
        <dbReference type="Rhea" id="RHEA:11816"/>
        <dbReference type="ChEBI" id="CHEBI:57634"/>
        <dbReference type="ChEBI" id="CHEBI:58225"/>
        <dbReference type="EC" id="5.3.1.9"/>
    </reaction>
</comment>
<comment type="pathway">
    <text evidence="1">Carbohydrate biosynthesis; gluconeogenesis.</text>
</comment>
<comment type="pathway">
    <text evidence="1">Carbohydrate degradation; glycolysis; D-glyceraldehyde 3-phosphate and glycerone phosphate from D-glucose: step 2/4.</text>
</comment>
<comment type="subcellular location">
    <subcellularLocation>
        <location evidence="1">Cytoplasm</location>
    </subcellularLocation>
</comment>
<comment type="similarity">
    <text evidence="1">Belongs to the GPI family.</text>
</comment>
<organism>
    <name type="scientific">Solidesulfovibrio magneticus (strain ATCC 700980 / DSM 13731 / RS-1)</name>
    <name type="common">Desulfovibrio magneticus</name>
    <dbReference type="NCBI Taxonomy" id="573370"/>
    <lineage>
        <taxon>Bacteria</taxon>
        <taxon>Pseudomonadati</taxon>
        <taxon>Thermodesulfobacteriota</taxon>
        <taxon>Desulfovibrionia</taxon>
        <taxon>Desulfovibrionales</taxon>
        <taxon>Desulfovibrionaceae</taxon>
        <taxon>Solidesulfovibrio</taxon>
    </lineage>
</organism>
<accession>C4XST3</accession>
<gene>
    <name evidence="1" type="primary">pgi</name>
    <name type="ordered locus">DMR_22840</name>
</gene>